<sequence length="251" mass="27602">MTEAQRHQILLEMLAQLGFVTVEKVVERLGISPATARRDINKLDESGKLKKVRNGAEAITQQRPRWTPMNLHQAQNHDEKVRIAKAASQLVNPGESVVINCGSTAFLLGREMCGKPVQIITNYLPLANYLIDQEHDSVIIMGGQYNKSQSITLSPQGSENSLYAGHWMFTSGKGLTAEGLYKTDMLTAMAEQKMLSVVGKLVVLVDSSKIGERAGMLFSRADQIDMLITGKNANPEILQQLEAQGVSILRV</sequence>
<name>ULAR_ECO24</name>
<gene>
    <name evidence="1" type="primary">ulaR</name>
    <name type="ordered locus">EcE24377A_4750</name>
</gene>
<comment type="function">
    <text evidence="1">Represses ulaG and the ulaABCDEF operon.</text>
</comment>
<comment type="subcellular location">
    <subcellularLocation>
        <location evidence="1">Cytoplasm</location>
    </subcellularLocation>
</comment>
<protein>
    <recommendedName>
        <fullName evidence="1">HTH-type transcriptional regulator UlaR</fullName>
    </recommendedName>
</protein>
<feature type="chain" id="PRO_1000069046" description="HTH-type transcriptional regulator UlaR">
    <location>
        <begin position="1"/>
        <end position="251"/>
    </location>
</feature>
<feature type="domain" description="HTH deoR-type" evidence="1">
    <location>
        <begin position="3"/>
        <end position="58"/>
    </location>
</feature>
<feature type="DNA-binding region" description="H-T-H motif" evidence="1">
    <location>
        <begin position="20"/>
        <end position="39"/>
    </location>
</feature>
<reference key="1">
    <citation type="journal article" date="2008" name="J. Bacteriol.">
        <title>The pangenome structure of Escherichia coli: comparative genomic analysis of E. coli commensal and pathogenic isolates.</title>
        <authorList>
            <person name="Rasko D.A."/>
            <person name="Rosovitz M.J."/>
            <person name="Myers G.S.A."/>
            <person name="Mongodin E.F."/>
            <person name="Fricke W.F."/>
            <person name="Gajer P."/>
            <person name="Crabtree J."/>
            <person name="Sebaihia M."/>
            <person name="Thomson N.R."/>
            <person name="Chaudhuri R."/>
            <person name="Henderson I.R."/>
            <person name="Sperandio V."/>
            <person name="Ravel J."/>
        </authorList>
    </citation>
    <scope>NUCLEOTIDE SEQUENCE [LARGE SCALE GENOMIC DNA]</scope>
    <source>
        <strain>E24377A / ETEC</strain>
    </source>
</reference>
<proteinExistence type="inferred from homology"/>
<accession>A7ZV62</accession>
<organism>
    <name type="scientific">Escherichia coli O139:H28 (strain E24377A / ETEC)</name>
    <dbReference type="NCBI Taxonomy" id="331111"/>
    <lineage>
        <taxon>Bacteria</taxon>
        <taxon>Pseudomonadati</taxon>
        <taxon>Pseudomonadota</taxon>
        <taxon>Gammaproteobacteria</taxon>
        <taxon>Enterobacterales</taxon>
        <taxon>Enterobacteriaceae</taxon>
        <taxon>Escherichia</taxon>
    </lineage>
</organism>
<evidence type="ECO:0000255" key="1">
    <source>
        <dbReference type="HAMAP-Rule" id="MF_01563"/>
    </source>
</evidence>
<keyword id="KW-0963">Cytoplasm</keyword>
<keyword id="KW-0238">DNA-binding</keyword>
<keyword id="KW-1185">Reference proteome</keyword>
<keyword id="KW-0678">Repressor</keyword>
<keyword id="KW-0804">Transcription</keyword>
<keyword id="KW-0805">Transcription regulation</keyword>
<dbReference type="EMBL" id="CP000800">
    <property type="protein sequence ID" value="ABV18505.1"/>
    <property type="molecule type" value="Genomic_DNA"/>
</dbReference>
<dbReference type="RefSeq" id="WP_000133631.1">
    <property type="nucleotide sequence ID" value="NC_009801.1"/>
</dbReference>
<dbReference type="SMR" id="A7ZV62"/>
<dbReference type="GeneID" id="75202425"/>
<dbReference type="KEGG" id="ecw:EcE24377A_4750"/>
<dbReference type="HOGENOM" id="CLU_060699_3_2_6"/>
<dbReference type="Proteomes" id="UP000001122">
    <property type="component" value="Chromosome"/>
</dbReference>
<dbReference type="GO" id="GO:0005737">
    <property type="term" value="C:cytoplasm"/>
    <property type="evidence" value="ECO:0007669"/>
    <property type="project" value="UniProtKB-SubCell"/>
</dbReference>
<dbReference type="GO" id="GO:0003677">
    <property type="term" value="F:DNA binding"/>
    <property type="evidence" value="ECO:0007669"/>
    <property type="project" value="UniProtKB-KW"/>
</dbReference>
<dbReference type="GO" id="GO:0003700">
    <property type="term" value="F:DNA-binding transcription factor activity"/>
    <property type="evidence" value="ECO:0007669"/>
    <property type="project" value="InterPro"/>
</dbReference>
<dbReference type="GO" id="GO:0045892">
    <property type="term" value="P:negative regulation of DNA-templated transcription"/>
    <property type="evidence" value="ECO:0007669"/>
    <property type="project" value="UniProtKB-UniRule"/>
</dbReference>
<dbReference type="FunFam" id="1.10.10.10:FF:000160">
    <property type="entry name" value="HTH-type transcriptional regulator UlaR"/>
    <property type="match status" value="1"/>
</dbReference>
<dbReference type="Gene3D" id="1.10.10.10">
    <property type="entry name" value="Winged helix-like DNA-binding domain superfamily/Winged helix DNA-binding domain"/>
    <property type="match status" value="1"/>
</dbReference>
<dbReference type="HAMAP" id="MF_01563">
    <property type="entry name" value="HTH_type_UlaR"/>
    <property type="match status" value="1"/>
</dbReference>
<dbReference type="InterPro" id="IPR050313">
    <property type="entry name" value="Carb_Metab_HTH_regulators"/>
</dbReference>
<dbReference type="InterPro" id="IPR014036">
    <property type="entry name" value="DeoR-like_C"/>
</dbReference>
<dbReference type="InterPro" id="IPR001034">
    <property type="entry name" value="DeoR_HTH"/>
</dbReference>
<dbReference type="InterPro" id="IPR037171">
    <property type="entry name" value="NagB/RpiA_transferase-like"/>
</dbReference>
<dbReference type="InterPro" id="IPR018356">
    <property type="entry name" value="Tscrpt_reg_HTH_DeoR_CS"/>
</dbReference>
<dbReference type="InterPro" id="IPR023711">
    <property type="entry name" value="Tscrpt_reg_HTH_UlaR"/>
</dbReference>
<dbReference type="InterPro" id="IPR036388">
    <property type="entry name" value="WH-like_DNA-bd_sf"/>
</dbReference>
<dbReference type="InterPro" id="IPR036390">
    <property type="entry name" value="WH_DNA-bd_sf"/>
</dbReference>
<dbReference type="NCBIfam" id="NF010034">
    <property type="entry name" value="PRK13509.1"/>
    <property type="match status" value="1"/>
</dbReference>
<dbReference type="PANTHER" id="PTHR30363">
    <property type="entry name" value="HTH-TYPE TRANSCRIPTIONAL REGULATOR SRLR-RELATED"/>
    <property type="match status" value="1"/>
</dbReference>
<dbReference type="PANTHER" id="PTHR30363:SF55">
    <property type="entry name" value="HTH-TYPE TRANSCRIPTIONAL REGULATOR ULAR"/>
    <property type="match status" value="1"/>
</dbReference>
<dbReference type="Pfam" id="PF00455">
    <property type="entry name" value="DeoRC"/>
    <property type="match status" value="1"/>
</dbReference>
<dbReference type="Pfam" id="PF08220">
    <property type="entry name" value="HTH_DeoR"/>
    <property type="match status" value="1"/>
</dbReference>
<dbReference type="PRINTS" id="PR00037">
    <property type="entry name" value="HTHLACR"/>
</dbReference>
<dbReference type="SMART" id="SM01134">
    <property type="entry name" value="DeoRC"/>
    <property type="match status" value="1"/>
</dbReference>
<dbReference type="SMART" id="SM00420">
    <property type="entry name" value="HTH_DEOR"/>
    <property type="match status" value="1"/>
</dbReference>
<dbReference type="SUPFAM" id="SSF100950">
    <property type="entry name" value="NagB/RpiA/CoA transferase-like"/>
    <property type="match status" value="1"/>
</dbReference>
<dbReference type="SUPFAM" id="SSF46785">
    <property type="entry name" value="Winged helix' DNA-binding domain"/>
    <property type="match status" value="1"/>
</dbReference>
<dbReference type="PROSITE" id="PS00894">
    <property type="entry name" value="HTH_DEOR_1"/>
    <property type="match status" value="1"/>
</dbReference>
<dbReference type="PROSITE" id="PS51000">
    <property type="entry name" value="HTH_DEOR_2"/>
    <property type="match status" value="1"/>
</dbReference>